<gene>
    <name type="primary">Amy-d</name>
    <name type="ORF">GE11648</name>
</gene>
<feature type="signal peptide" evidence="1">
    <location>
        <begin position="1"/>
        <end position="18"/>
    </location>
</feature>
<feature type="chain" id="PRO_0000001367" description="Alpha-amylase B">
    <location>
        <begin position="19"/>
        <end position="494"/>
    </location>
</feature>
<feature type="active site" description="Nucleophile" evidence="2">
    <location>
        <position position="204"/>
    </location>
</feature>
<feature type="active site" description="Proton donor" evidence="2">
    <location>
        <position position="241"/>
    </location>
</feature>
<feature type="binding site" evidence="2">
    <location>
        <position position="116"/>
    </location>
    <ligand>
        <name>Ca(2+)</name>
        <dbReference type="ChEBI" id="CHEBI:29108"/>
    </ligand>
</feature>
<feature type="binding site" evidence="2">
    <location>
        <position position="165"/>
    </location>
    <ligand>
        <name>Ca(2+)</name>
        <dbReference type="ChEBI" id="CHEBI:29108"/>
    </ligand>
</feature>
<feature type="binding site" evidence="2">
    <location>
        <position position="174"/>
    </location>
    <ligand>
        <name>Ca(2+)</name>
        <dbReference type="ChEBI" id="CHEBI:29108"/>
    </ligand>
</feature>
<feature type="binding site" evidence="2">
    <location>
        <position position="202"/>
    </location>
    <ligand>
        <name>chloride</name>
        <dbReference type="ChEBI" id="CHEBI:17996"/>
    </ligand>
</feature>
<feature type="binding site" evidence="2">
    <location>
        <position position="208"/>
    </location>
    <ligand>
        <name>Ca(2+)</name>
        <dbReference type="ChEBI" id="CHEBI:29108"/>
    </ligand>
</feature>
<feature type="binding site" evidence="2">
    <location>
        <position position="304"/>
    </location>
    <ligand>
        <name>chloride</name>
        <dbReference type="ChEBI" id="CHEBI:17996"/>
    </ligand>
</feature>
<feature type="binding site" evidence="2">
    <location>
        <position position="343"/>
    </location>
    <ligand>
        <name>chloride</name>
        <dbReference type="ChEBI" id="CHEBI:17996"/>
    </ligand>
</feature>
<feature type="site" description="Transition state stabilizer" evidence="2">
    <location>
        <position position="306"/>
    </location>
</feature>
<feature type="modified residue" description="Pyrrolidone carboxylic acid" evidence="1">
    <location>
        <position position="19"/>
    </location>
</feature>
<feature type="disulfide bond" evidence="2">
    <location>
        <begin position="46"/>
        <end position="102"/>
    </location>
</feature>
<feature type="disulfide bond" evidence="2">
    <location>
        <begin position="153"/>
        <end position="167"/>
    </location>
</feature>
<feature type="disulfide bond" evidence="2">
    <location>
        <begin position="376"/>
        <end position="382"/>
    </location>
</feature>
<feature type="disulfide bond" evidence="2">
    <location>
        <begin position="448"/>
        <end position="460"/>
    </location>
</feature>
<feature type="sequence variant" description="In strain: LO4.">
    <original>NS</original>
    <variation>DP</variation>
    <location>
        <begin position="179"/>
        <end position="180"/>
    </location>
</feature>
<feature type="sequence variant" description="In strain: LO4.">
    <original>D</original>
    <variation>N</variation>
    <location>
        <position position="195"/>
    </location>
</feature>
<feature type="sequence variant" description="In strain: LO4.">
    <original>A</original>
    <variation>V</variation>
    <location>
        <position position="330"/>
    </location>
</feature>
<feature type="sequence variant" description="In strain: LO4.">
    <original>V</original>
    <variation>A</variation>
    <location>
        <position position="381"/>
    </location>
</feature>
<feature type="sequence variant" description="In strain: LO4.">
    <original>Q</original>
    <variation>P</variation>
    <location>
        <position position="405"/>
    </location>
</feature>
<feature type="sequence variant" description="In strain: LO4.">
    <original>F</original>
    <variation>Y</variation>
    <location>
        <position position="427"/>
    </location>
</feature>
<accession>Q9BN01</accession>
<accession>B4P8G7</accession>
<accession>P51548</accession>
<reference key="1">
    <citation type="journal article" date="1995" name="Genetics">
        <title>Molecular evolution of the duplicated Amy locus in the Drosophila melanogaster species subgroup: concerted evolution only in the coding region and an excess of nonsynonymous substitutions in speciation.</title>
        <authorList>
            <person name="Shibata H."/>
            <person name="Yamazaki T."/>
        </authorList>
    </citation>
    <scope>NUCLEOTIDE SEQUENCE [GENOMIC DNA]</scope>
</reference>
<reference key="2">
    <citation type="journal article" date="2001" name="Mol. Ecol.">
        <title>Divergence between Drosophila santomea and allopatric or sympatric populations of D. yakuba using paralogous amylase genes and migration scenarios along the Cameroon volcanic line.</title>
        <authorList>
            <person name="Cariou M.-L."/>
            <person name="Silvain J.-F."/>
            <person name="Daubin V."/>
            <person name="Da Lage J.-L."/>
            <person name="Lachaise D."/>
        </authorList>
    </citation>
    <scope>NUCLEOTIDE SEQUENCE [GENOMIC DNA]</scope>
    <source>
        <strain>LBV1</strain>
        <strain>LO4</strain>
        <strain>SA2</strain>
        <strain>SA3</strain>
    </source>
</reference>
<reference key="3">
    <citation type="journal article" date="2007" name="Nature">
        <title>Evolution of genes and genomes on the Drosophila phylogeny.</title>
        <authorList>
            <consortium name="Drosophila 12 genomes consortium"/>
        </authorList>
    </citation>
    <scope>NUCLEOTIDE SEQUENCE [LARGE SCALE GENOMIC DNA]</scope>
    <source>
        <strain>Tai18E2 / Tucson 14021-0261.01</strain>
    </source>
</reference>
<keyword id="KW-0106">Calcium</keyword>
<keyword id="KW-0119">Carbohydrate metabolism</keyword>
<keyword id="KW-0868">Chloride</keyword>
<keyword id="KW-1015">Disulfide bond</keyword>
<keyword id="KW-0326">Glycosidase</keyword>
<keyword id="KW-0378">Hydrolase</keyword>
<keyword id="KW-0479">Metal-binding</keyword>
<keyword id="KW-0873">Pyrrolidone carboxylic acid</keyword>
<keyword id="KW-0732">Signal</keyword>
<comment type="catalytic activity">
    <reaction evidence="2">
        <text>Endohydrolysis of (1-&gt;4)-alpha-D-glucosidic linkages in polysaccharides containing three or more (1-&gt;4)-alpha-linked D-glucose units.</text>
        <dbReference type="EC" id="3.2.1.1"/>
    </reaction>
</comment>
<comment type="cofactor">
    <cofactor evidence="2">
        <name>Ca(2+)</name>
        <dbReference type="ChEBI" id="CHEBI:29108"/>
    </cofactor>
    <text evidence="2">Binds 1 Ca(2+) ion per subunit.</text>
</comment>
<comment type="cofactor">
    <cofactor evidence="2">
        <name>chloride</name>
        <dbReference type="ChEBI" id="CHEBI:17996"/>
    </cofactor>
    <text evidence="2">Binds 1 Cl(-) ion per subunit.</text>
</comment>
<comment type="subunit">
    <text evidence="1">Monomer.</text>
</comment>
<comment type="similarity">
    <text evidence="3">Belongs to the glycosyl hydrolase 13 family.</text>
</comment>
<dbReference type="EC" id="3.2.1.1" evidence="2"/>
<dbReference type="EMBL" id="D17737">
    <property type="protein sequence ID" value="BAA04590.1"/>
    <property type="molecule type" value="Genomic_DNA"/>
</dbReference>
<dbReference type="EMBL" id="AF280886">
    <property type="protein sequence ID" value="AAG60011.1"/>
    <property type="molecule type" value="Genomic_DNA"/>
</dbReference>
<dbReference type="EMBL" id="AF280887">
    <property type="protein sequence ID" value="AAG60012.1"/>
    <property type="molecule type" value="Genomic_DNA"/>
</dbReference>
<dbReference type="EMBL" id="AF280888">
    <property type="protein sequence ID" value="AAG60013.1"/>
    <property type="molecule type" value="Genomic_DNA"/>
</dbReference>
<dbReference type="EMBL" id="AF280889">
    <property type="protein sequence ID" value="AAG60014.1"/>
    <property type="molecule type" value="Genomic_DNA"/>
</dbReference>
<dbReference type="EMBL" id="CM000158">
    <property type="protein sequence ID" value="EDW92184.1"/>
    <property type="molecule type" value="Genomic_DNA"/>
</dbReference>
<dbReference type="PIR" id="S58946">
    <property type="entry name" value="S58946"/>
</dbReference>
<dbReference type="SMR" id="Q9BN01"/>
<dbReference type="CAZy" id="GH13">
    <property type="family name" value="Glycoside Hydrolase Family 13"/>
</dbReference>
<dbReference type="EnsemblMetazoa" id="FBtr0258166">
    <property type="protein sequence ID" value="FBpp0256658"/>
    <property type="gene ID" value="FBgn0013165"/>
</dbReference>
<dbReference type="EnsemblMetazoa" id="XM_002092436.4">
    <property type="protein sequence ID" value="XP_002092472.1"/>
    <property type="gene ID" value="LOC6531681"/>
</dbReference>
<dbReference type="EnsemblMetazoa" id="XM_039372195.1">
    <property type="protein sequence ID" value="XP_039228129.1"/>
    <property type="gene ID" value="LOC6531683"/>
</dbReference>
<dbReference type="GeneID" id="6531681"/>
<dbReference type="KEGG" id="dya:Dyak_GE11648"/>
<dbReference type="eggNOG" id="KOG2212">
    <property type="taxonomic scope" value="Eukaryota"/>
</dbReference>
<dbReference type="HOGENOM" id="CLU_013336_2_1_1"/>
<dbReference type="OMA" id="HPWWEVY"/>
<dbReference type="OrthoDB" id="550577at2759"/>
<dbReference type="PhylomeDB" id="Q9BN01"/>
<dbReference type="Proteomes" id="UP000002282">
    <property type="component" value="Chromosome 2R"/>
</dbReference>
<dbReference type="GO" id="GO:0004556">
    <property type="term" value="F:alpha-amylase activity"/>
    <property type="evidence" value="ECO:0007669"/>
    <property type="project" value="UniProtKB-EC"/>
</dbReference>
<dbReference type="GO" id="GO:0046872">
    <property type="term" value="F:metal ion binding"/>
    <property type="evidence" value="ECO:0007669"/>
    <property type="project" value="UniProtKB-KW"/>
</dbReference>
<dbReference type="GO" id="GO:0005975">
    <property type="term" value="P:carbohydrate metabolic process"/>
    <property type="evidence" value="ECO:0007669"/>
    <property type="project" value="InterPro"/>
</dbReference>
<dbReference type="CDD" id="cd11317">
    <property type="entry name" value="AmyAc_bac_euk_AmyA"/>
    <property type="match status" value="1"/>
</dbReference>
<dbReference type="FunFam" id="2.60.40.1180:FF:000020">
    <property type="entry name" value="Pancreatic alpha-amylase"/>
    <property type="match status" value="1"/>
</dbReference>
<dbReference type="FunFam" id="3.20.20.80:FF:000056">
    <property type="entry name" value="Pancreatic alpha-amylase"/>
    <property type="match status" value="1"/>
</dbReference>
<dbReference type="Gene3D" id="3.20.20.80">
    <property type="entry name" value="Glycosidases"/>
    <property type="match status" value="1"/>
</dbReference>
<dbReference type="Gene3D" id="2.60.40.1180">
    <property type="entry name" value="Golgi alpha-mannosidase II"/>
    <property type="match status" value="1"/>
</dbReference>
<dbReference type="InterPro" id="IPR006048">
    <property type="entry name" value="A-amylase/branching_C"/>
</dbReference>
<dbReference type="InterPro" id="IPR031319">
    <property type="entry name" value="A-amylase_C"/>
</dbReference>
<dbReference type="InterPro" id="IPR006046">
    <property type="entry name" value="Alpha_amylase"/>
</dbReference>
<dbReference type="InterPro" id="IPR006047">
    <property type="entry name" value="Glyco_hydro_13_cat_dom"/>
</dbReference>
<dbReference type="InterPro" id="IPR013780">
    <property type="entry name" value="Glyco_hydro_b"/>
</dbReference>
<dbReference type="InterPro" id="IPR017853">
    <property type="entry name" value="Glycoside_hydrolase_SF"/>
</dbReference>
<dbReference type="PANTHER" id="PTHR43447">
    <property type="entry name" value="ALPHA-AMYLASE"/>
    <property type="match status" value="1"/>
</dbReference>
<dbReference type="Pfam" id="PF00128">
    <property type="entry name" value="Alpha-amylase"/>
    <property type="match status" value="1"/>
</dbReference>
<dbReference type="Pfam" id="PF02806">
    <property type="entry name" value="Alpha-amylase_C"/>
    <property type="match status" value="1"/>
</dbReference>
<dbReference type="PRINTS" id="PR00110">
    <property type="entry name" value="ALPHAAMYLASE"/>
</dbReference>
<dbReference type="SMART" id="SM00642">
    <property type="entry name" value="Aamy"/>
    <property type="match status" value="1"/>
</dbReference>
<dbReference type="SMART" id="SM00632">
    <property type="entry name" value="Aamy_C"/>
    <property type="match status" value="1"/>
</dbReference>
<dbReference type="SUPFAM" id="SSF51445">
    <property type="entry name" value="(Trans)glycosidases"/>
    <property type="match status" value="1"/>
</dbReference>
<dbReference type="SUPFAM" id="SSF51011">
    <property type="entry name" value="Glycosyl hydrolase domain"/>
    <property type="match status" value="1"/>
</dbReference>
<protein>
    <recommendedName>
        <fullName>Alpha-amylase B</fullName>
        <ecNumber evidence="2">3.2.1.1</ecNumber>
    </recommendedName>
    <alternativeName>
        <fullName>1,4-alpha-D-glucan glucanohydrolase</fullName>
    </alternativeName>
</protein>
<evidence type="ECO:0000250" key="1"/>
<evidence type="ECO:0000250" key="2">
    <source>
        <dbReference type="UniProtKB" id="P04746"/>
    </source>
</evidence>
<evidence type="ECO:0000305" key="3"/>
<proteinExistence type="inferred from homology"/>
<organism>
    <name type="scientific">Drosophila yakuba</name>
    <name type="common">Fruit fly</name>
    <dbReference type="NCBI Taxonomy" id="7245"/>
    <lineage>
        <taxon>Eukaryota</taxon>
        <taxon>Metazoa</taxon>
        <taxon>Ecdysozoa</taxon>
        <taxon>Arthropoda</taxon>
        <taxon>Hexapoda</taxon>
        <taxon>Insecta</taxon>
        <taxon>Pterygota</taxon>
        <taxon>Neoptera</taxon>
        <taxon>Endopterygota</taxon>
        <taxon>Diptera</taxon>
        <taxon>Brachycera</taxon>
        <taxon>Muscomorpha</taxon>
        <taxon>Ephydroidea</taxon>
        <taxon>Drosophilidae</taxon>
        <taxon>Drosophila</taxon>
        <taxon>Sophophora</taxon>
    </lineage>
</organism>
<sequence length="494" mass="53688">MFLAKSIVCLALLAVANAQFDTNYASGRSGMVHLFEWKWDDIAAECENFLGPNGFAGVQVSPVNENAVKDSRPWWERYQPISYKLETRSGNEQQFASMVKRCNAVGVRTYVDVVFNHMAADGGTYGTGGSTASPSTKSFPGVPYSSLDFNPTCSINNYNDANQVRNCELVGLRDLNQGNSYVQDKVVEFLDHLIDLGVAGFRVDAAKHMWPADLAVIYGRLKTLNTDHGFNSGSKAYIVQEVIDMGGEAISKSEYTGLGAVTEFRHSDSIGKVFRGKDQLQYLTNWGTAWGFAASDRSLVFVDNHDNQRGHGAGGADVLTYKVPKQYKMASAFMLAHPFGTPRVMSSFSFSDTDQGPPTTDGHNIASPVFNSDNSCSGGWVCEHRWRQIYNMVAFRNAVGSDAIQNWWDNGSNQIAFSRGSRGFVAFNNDNYDLNSSLQTGLPAGTYCDVISGSKSGSSCTGKTVSVGSDGRASIYLGSSEDDGVLAIHVNAKL</sequence>
<name>AMYB_DROYA</name>